<evidence type="ECO:0000255" key="1">
    <source>
        <dbReference type="HAMAP-Rule" id="MF_01347"/>
    </source>
</evidence>
<keyword id="KW-0066">ATP synthesis</keyword>
<keyword id="KW-0067">ATP-binding</keyword>
<keyword id="KW-0997">Cell inner membrane</keyword>
<keyword id="KW-1003">Cell membrane</keyword>
<keyword id="KW-0139">CF(1)</keyword>
<keyword id="KW-0375">Hydrogen ion transport</keyword>
<keyword id="KW-0406">Ion transport</keyword>
<keyword id="KW-0472">Membrane</keyword>
<keyword id="KW-0547">Nucleotide-binding</keyword>
<keyword id="KW-1278">Translocase</keyword>
<keyword id="KW-0813">Transport</keyword>
<feature type="chain" id="PRO_0000254371" description="ATP synthase subunit beta">
    <location>
        <begin position="1"/>
        <end position="460"/>
    </location>
</feature>
<feature type="binding site" evidence="1">
    <location>
        <begin position="150"/>
        <end position="157"/>
    </location>
    <ligand>
        <name>ATP</name>
        <dbReference type="ChEBI" id="CHEBI:30616"/>
    </ligand>
</feature>
<name>ATPB_SALTI</name>
<comment type="function">
    <text evidence="1">Produces ATP from ADP in the presence of a proton gradient across the membrane. The catalytic sites are hosted primarily by the beta subunits.</text>
</comment>
<comment type="catalytic activity">
    <reaction evidence="1">
        <text>ATP + H2O + 4 H(+)(in) = ADP + phosphate + 5 H(+)(out)</text>
        <dbReference type="Rhea" id="RHEA:57720"/>
        <dbReference type="ChEBI" id="CHEBI:15377"/>
        <dbReference type="ChEBI" id="CHEBI:15378"/>
        <dbReference type="ChEBI" id="CHEBI:30616"/>
        <dbReference type="ChEBI" id="CHEBI:43474"/>
        <dbReference type="ChEBI" id="CHEBI:456216"/>
        <dbReference type="EC" id="7.1.2.2"/>
    </reaction>
</comment>
<comment type="subunit">
    <text evidence="1">F-type ATPases have 2 components, CF(1) - the catalytic core - and CF(0) - the membrane proton channel. CF(1) has five subunits: alpha(3), beta(3), gamma(1), delta(1), epsilon(1). CF(0) has three main subunits: a(1), b(2) and c(9-12). The alpha and beta chains form an alternating ring which encloses part of the gamma chain. CF(1) is attached to CF(0) by a central stalk formed by the gamma and epsilon chains, while a peripheral stalk is formed by the delta and b chains.</text>
</comment>
<comment type="subcellular location">
    <subcellularLocation>
        <location evidence="1">Cell inner membrane</location>
        <topology evidence="1">Peripheral membrane protein</topology>
    </subcellularLocation>
</comment>
<comment type="similarity">
    <text evidence="1">Belongs to the ATPase alpha/beta chains family.</text>
</comment>
<sequence>MATGKIVQVIGAVVDVEFPQDAVPRVYDALEVQNGNEKLVLEVQQQLGGGIVRTIAMGSSDGLRRGLDVKDLEHPIEVPVGKATLGRIMNVLGEPVDMKGEIGEEERWAIHRAAPSYEELSNSQELLETGIKVIDLMCPFAKGGKVGLFGGAGVGKTVNMMELIRNIAIEHSGYSVFAGVGERTREGNDFYHEMTDSNVIDKVSLVYGQMNEPPGNRLRVALTGLTMAEKFRDEGRDVLLFVDNIYRYTLAGTEVSALLGRMPSAVGYQPTLAEEMGVLQERITSTKTGSITSVQAVYVPADDLTDPSPATTFAHLDATVVLSRQIASLGIYPAVDPLDSTSRQLDPLVVGQEHYDTARGVQSILQRYQELKDIIAILGMDELSEEDKLVVARARKIQRFLSQPFFVAEVFTGSPGKYVSLKDTIRGFKGIMEGEYDHLPEQAFYMVGSIDEAVEKAKKL</sequence>
<proteinExistence type="inferred from homology"/>
<accession>Q8XGX4</accession>
<accession>Q7AM13</accession>
<organism>
    <name type="scientific">Salmonella typhi</name>
    <dbReference type="NCBI Taxonomy" id="90370"/>
    <lineage>
        <taxon>Bacteria</taxon>
        <taxon>Pseudomonadati</taxon>
        <taxon>Pseudomonadota</taxon>
        <taxon>Gammaproteobacteria</taxon>
        <taxon>Enterobacterales</taxon>
        <taxon>Enterobacteriaceae</taxon>
        <taxon>Salmonella</taxon>
    </lineage>
</organism>
<dbReference type="EC" id="7.1.2.2" evidence="1"/>
<dbReference type="EMBL" id="AE014613">
    <property type="protein sequence ID" value="AAO71151.1"/>
    <property type="molecule type" value="Genomic_DNA"/>
</dbReference>
<dbReference type="EMBL" id="AL513382">
    <property type="protein sequence ID" value="CAD03130.1"/>
    <property type="molecule type" value="Genomic_DNA"/>
</dbReference>
<dbReference type="PIR" id="S70719">
    <property type="entry name" value="S70719"/>
</dbReference>
<dbReference type="RefSeq" id="NP_458078.1">
    <property type="nucleotide sequence ID" value="NC_003198.1"/>
</dbReference>
<dbReference type="RefSeq" id="WP_000190499.1">
    <property type="nucleotide sequence ID" value="NZ_WSUR01000023.1"/>
</dbReference>
<dbReference type="SMR" id="Q8XGX4"/>
<dbReference type="STRING" id="220341.gene:17587773"/>
<dbReference type="GeneID" id="66758154"/>
<dbReference type="KEGG" id="stt:t3654"/>
<dbReference type="KEGG" id="sty:STY3913"/>
<dbReference type="PATRIC" id="fig|220341.7.peg.3993"/>
<dbReference type="eggNOG" id="COG0055">
    <property type="taxonomic scope" value="Bacteria"/>
</dbReference>
<dbReference type="HOGENOM" id="CLU_022398_0_2_6"/>
<dbReference type="OMA" id="SMEEGGW"/>
<dbReference type="OrthoDB" id="9801639at2"/>
<dbReference type="Proteomes" id="UP000000541">
    <property type="component" value="Chromosome"/>
</dbReference>
<dbReference type="Proteomes" id="UP000002670">
    <property type="component" value="Chromosome"/>
</dbReference>
<dbReference type="GO" id="GO:0005886">
    <property type="term" value="C:plasma membrane"/>
    <property type="evidence" value="ECO:0007669"/>
    <property type="project" value="UniProtKB-SubCell"/>
</dbReference>
<dbReference type="GO" id="GO:0045259">
    <property type="term" value="C:proton-transporting ATP synthase complex"/>
    <property type="evidence" value="ECO:0007669"/>
    <property type="project" value="UniProtKB-KW"/>
</dbReference>
<dbReference type="GO" id="GO:0005524">
    <property type="term" value="F:ATP binding"/>
    <property type="evidence" value="ECO:0007669"/>
    <property type="project" value="UniProtKB-UniRule"/>
</dbReference>
<dbReference type="GO" id="GO:0016887">
    <property type="term" value="F:ATP hydrolysis activity"/>
    <property type="evidence" value="ECO:0007669"/>
    <property type="project" value="InterPro"/>
</dbReference>
<dbReference type="GO" id="GO:0046933">
    <property type="term" value="F:proton-transporting ATP synthase activity, rotational mechanism"/>
    <property type="evidence" value="ECO:0007669"/>
    <property type="project" value="UniProtKB-UniRule"/>
</dbReference>
<dbReference type="CDD" id="cd18110">
    <property type="entry name" value="ATP-synt_F1_beta_C"/>
    <property type="match status" value="1"/>
</dbReference>
<dbReference type="CDD" id="cd18115">
    <property type="entry name" value="ATP-synt_F1_beta_N"/>
    <property type="match status" value="1"/>
</dbReference>
<dbReference type="CDD" id="cd01133">
    <property type="entry name" value="F1-ATPase_beta_CD"/>
    <property type="match status" value="1"/>
</dbReference>
<dbReference type="FunFam" id="1.10.1140.10:FF:000001">
    <property type="entry name" value="ATP synthase subunit beta"/>
    <property type="match status" value="1"/>
</dbReference>
<dbReference type="FunFam" id="2.40.10.170:FF:000003">
    <property type="entry name" value="ATP synthase subunit beta"/>
    <property type="match status" value="1"/>
</dbReference>
<dbReference type="FunFam" id="3.40.50.300:FF:000004">
    <property type="entry name" value="ATP synthase subunit beta"/>
    <property type="match status" value="1"/>
</dbReference>
<dbReference type="Gene3D" id="2.40.10.170">
    <property type="match status" value="1"/>
</dbReference>
<dbReference type="Gene3D" id="1.10.1140.10">
    <property type="entry name" value="Bovine Mitochondrial F1-atpase, Atp Synthase Beta Chain, Chain D, domain 3"/>
    <property type="match status" value="1"/>
</dbReference>
<dbReference type="Gene3D" id="3.40.50.300">
    <property type="entry name" value="P-loop containing nucleotide triphosphate hydrolases"/>
    <property type="match status" value="1"/>
</dbReference>
<dbReference type="HAMAP" id="MF_01347">
    <property type="entry name" value="ATP_synth_beta_bact"/>
    <property type="match status" value="1"/>
</dbReference>
<dbReference type="InterPro" id="IPR003593">
    <property type="entry name" value="AAA+_ATPase"/>
</dbReference>
<dbReference type="InterPro" id="IPR055190">
    <property type="entry name" value="ATP-synt_VA_C"/>
</dbReference>
<dbReference type="InterPro" id="IPR005722">
    <property type="entry name" value="ATP_synth_F1_bsu"/>
</dbReference>
<dbReference type="InterPro" id="IPR020003">
    <property type="entry name" value="ATPase_a/bsu_AS"/>
</dbReference>
<dbReference type="InterPro" id="IPR050053">
    <property type="entry name" value="ATPase_alpha/beta_chains"/>
</dbReference>
<dbReference type="InterPro" id="IPR004100">
    <property type="entry name" value="ATPase_F1/V1/A1_a/bsu_N"/>
</dbReference>
<dbReference type="InterPro" id="IPR036121">
    <property type="entry name" value="ATPase_F1/V1/A1_a/bsu_N_sf"/>
</dbReference>
<dbReference type="InterPro" id="IPR000194">
    <property type="entry name" value="ATPase_F1/V1/A1_a/bsu_nucl-bd"/>
</dbReference>
<dbReference type="InterPro" id="IPR024034">
    <property type="entry name" value="ATPase_F1/V1_b/a_C"/>
</dbReference>
<dbReference type="InterPro" id="IPR027417">
    <property type="entry name" value="P-loop_NTPase"/>
</dbReference>
<dbReference type="NCBIfam" id="TIGR01039">
    <property type="entry name" value="atpD"/>
    <property type="match status" value="1"/>
</dbReference>
<dbReference type="PANTHER" id="PTHR15184">
    <property type="entry name" value="ATP SYNTHASE"/>
    <property type="match status" value="1"/>
</dbReference>
<dbReference type="PANTHER" id="PTHR15184:SF71">
    <property type="entry name" value="ATP SYNTHASE SUBUNIT BETA, MITOCHONDRIAL"/>
    <property type="match status" value="1"/>
</dbReference>
<dbReference type="Pfam" id="PF00006">
    <property type="entry name" value="ATP-synt_ab"/>
    <property type="match status" value="1"/>
</dbReference>
<dbReference type="Pfam" id="PF02874">
    <property type="entry name" value="ATP-synt_ab_N"/>
    <property type="match status" value="1"/>
</dbReference>
<dbReference type="Pfam" id="PF22919">
    <property type="entry name" value="ATP-synt_VA_C"/>
    <property type="match status" value="1"/>
</dbReference>
<dbReference type="SMART" id="SM00382">
    <property type="entry name" value="AAA"/>
    <property type="match status" value="1"/>
</dbReference>
<dbReference type="SUPFAM" id="SSF47917">
    <property type="entry name" value="C-terminal domain of alpha and beta subunits of F1 ATP synthase"/>
    <property type="match status" value="1"/>
</dbReference>
<dbReference type="SUPFAM" id="SSF50615">
    <property type="entry name" value="N-terminal domain of alpha and beta subunits of F1 ATP synthase"/>
    <property type="match status" value="1"/>
</dbReference>
<dbReference type="SUPFAM" id="SSF52540">
    <property type="entry name" value="P-loop containing nucleoside triphosphate hydrolases"/>
    <property type="match status" value="1"/>
</dbReference>
<dbReference type="PROSITE" id="PS00152">
    <property type="entry name" value="ATPASE_ALPHA_BETA"/>
    <property type="match status" value="1"/>
</dbReference>
<reference key="1">
    <citation type="journal article" date="2003" name="J. Bacteriol.">
        <title>Comparative genomics of Salmonella enterica serovar Typhi strains Ty2 and CT18.</title>
        <authorList>
            <person name="Deng W."/>
            <person name="Liou S.-R."/>
            <person name="Plunkett G. III"/>
            <person name="Mayhew G.F."/>
            <person name="Rose D.J."/>
            <person name="Burland V."/>
            <person name="Kodoyianni V."/>
            <person name="Schwartz D.C."/>
            <person name="Blattner F.R."/>
        </authorList>
    </citation>
    <scope>NUCLEOTIDE SEQUENCE [LARGE SCALE GENOMIC DNA]</scope>
    <source>
        <strain>ATCC 700931 / Ty2</strain>
    </source>
</reference>
<reference key="2">
    <citation type="journal article" date="2001" name="Nature">
        <title>Complete genome sequence of a multiple drug resistant Salmonella enterica serovar Typhi CT18.</title>
        <authorList>
            <person name="Parkhill J."/>
            <person name="Dougan G."/>
            <person name="James K.D."/>
            <person name="Thomson N.R."/>
            <person name="Pickard D."/>
            <person name="Wain J."/>
            <person name="Churcher C.M."/>
            <person name="Mungall K.L."/>
            <person name="Bentley S.D."/>
            <person name="Holden M.T.G."/>
            <person name="Sebaihia M."/>
            <person name="Baker S."/>
            <person name="Basham D."/>
            <person name="Brooks K."/>
            <person name="Chillingworth T."/>
            <person name="Connerton P."/>
            <person name="Cronin A."/>
            <person name="Davis P."/>
            <person name="Davies R.M."/>
            <person name="Dowd L."/>
            <person name="White N."/>
            <person name="Farrar J."/>
            <person name="Feltwell T."/>
            <person name="Hamlin N."/>
            <person name="Haque A."/>
            <person name="Hien T.T."/>
            <person name="Holroyd S."/>
            <person name="Jagels K."/>
            <person name="Krogh A."/>
            <person name="Larsen T.S."/>
            <person name="Leather S."/>
            <person name="Moule S."/>
            <person name="O'Gaora P."/>
            <person name="Parry C."/>
            <person name="Quail M.A."/>
            <person name="Rutherford K.M."/>
            <person name="Simmonds M."/>
            <person name="Skelton J."/>
            <person name="Stevens K."/>
            <person name="Whitehead S."/>
            <person name="Barrell B.G."/>
        </authorList>
    </citation>
    <scope>NUCLEOTIDE SEQUENCE [LARGE SCALE GENOMIC DNA]</scope>
    <source>
        <strain>CT18</strain>
    </source>
</reference>
<protein>
    <recommendedName>
        <fullName evidence="1">ATP synthase subunit beta</fullName>
        <ecNumber evidence="1">7.1.2.2</ecNumber>
    </recommendedName>
    <alternativeName>
        <fullName evidence="1">ATP synthase F1 sector subunit beta</fullName>
    </alternativeName>
    <alternativeName>
        <fullName evidence="1">F-ATPase subunit beta</fullName>
    </alternativeName>
</protein>
<gene>
    <name evidence="1" type="primary">atpD</name>
    <name type="ordered locus">STY3913</name>
    <name type="ordered locus">t3654</name>
</gene>